<feature type="chain" id="PRO_0000271199" description="Transmembrane protein 45B">
    <location>
        <begin position="1"/>
        <end position="275"/>
    </location>
</feature>
<feature type="transmembrane region" description="Helical" evidence="3">
    <location>
        <begin position="7"/>
        <end position="27"/>
    </location>
</feature>
<feature type="transmembrane region" description="Helical" evidence="3">
    <location>
        <begin position="47"/>
        <end position="67"/>
    </location>
</feature>
<feature type="transmembrane region" description="Helical" evidence="3">
    <location>
        <begin position="94"/>
        <end position="114"/>
    </location>
</feature>
<feature type="transmembrane region" description="Helical" evidence="3">
    <location>
        <begin position="116"/>
        <end position="136"/>
    </location>
</feature>
<feature type="transmembrane region" description="Helical" evidence="3">
    <location>
        <begin position="146"/>
        <end position="166"/>
    </location>
</feature>
<feature type="transmembrane region" description="Helical" evidence="3">
    <location>
        <begin position="180"/>
        <end position="200"/>
    </location>
</feature>
<feature type="transmembrane region" description="Helical" evidence="3">
    <location>
        <begin position="212"/>
        <end position="232"/>
    </location>
</feature>
<feature type="modified residue" description="Phosphoserine" evidence="1">
    <location>
        <position position="270"/>
    </location>
</feature>
<feature type="modified residue" description="Phosphoserine" evidence="2">
    <location>
        <position position="272"/>
    </location>
</feature>
<feature type="sequence variant" id="VAR_029866" description="In dbSNP:rs558813.">
    <original>T</original>
    <variation>I</variation>
    <location>
        <position position="59"/>
    </location>
</feature>
<keyword id="KW-0967">Endosome</keyword>
<keyword id="KW-0333">Golgi apparatus</keyword>
<keyword id="KW-0391">Immunity</keyword>
<keyword id="KW-0399">Innate immunity</keyword>
<keyword id="KW-0458">Lysosome</keyword>
<keyword id="KW-0472">Membrane</keyword>
<keyword id="KW-0597">Phosphoprotein</keyword>
<keyword id="KW-1267">Proteomics identification</keyword>
<keyword id="KW-1185">Reference proteome</keyword>
<keyword id="KW-0812">Transmembrane</keyword>
<keyword id="KW-1133">Transmembrane helix</keyword>
<reference key="1">
    <citation type="journal article" date="2004" name="Nat. Genet.">
        <title>Complete sequencing and characterization of 21,243 full-length human cDNAs.</title>
        <authorList>
            <person name="Ota T."/>
            <person name="Suzuki Y."/>
            <person name="Nishikawa T."/>
            <person name="Otsuki T."/>
            <person name="Sugiyama T."/>
            <person name="Irie R."/>
            <person name="Wakamatsu A."/>
            <person name="Hayashi K."/>
            <person name="Sato H."/>
            <person name="Nagai K."/>
            <person name="Kimura K."/>
            <person name="Makita H."/>
            <person name="Sekine M."/>
            <person name="Obayashi M."/>
            <person name="Nishi T."/>
            <person name="Shibahara T."/>
            <person name="Tanaka T."/>
            <person name="Ishii S."/>
            <person name="Yamamoto J."/>
            <person name="Saito K."/>
            <person name="Kawai Y."/>
            <person name="Isono Y."/>
            <person name="Nakamura Y."/>
            <person name="Nagahari K."/>
            <person name="Murakami K."/>
            <person name="Yasuda T."/>
            <person name="Iwayanagi T."/>
            <person name="Wagatsuma M."/>
            <person name="Shiratori A."/>
            <person name="Sudo H."/>
            <person name="Hosoiri T."/>
            <person name="Kaku Y."/>
            <person name="Kodaira H."/>
            <person name="Kondo H."/>
            <person name="Sugawara M."/>
            <person name="Takahashi M."/>
            <person name="Kanda K."/>
            <person name="Yokoi T."/>
            <person name="Furuya T."/>
            <person name="Kikkawa E."/>
            <person name="Omura Y."/>
            <person name="Abe K."/>
            <person name="Kamihara K."/>
            <person name="Katsuta N."/>
            <person name="Sato K."/>
            <person name="Tanikawa M."/>
            <person name="Yamazaki M."/>
            <person name="Ninomiya K."/>
            <person name="Ishibashi T."/>
            <person name="Yamashita H."/>
            <person name="Murakawa K."/>
            <person name="Fujimori K."/>
            <person name="Tanai H."/>
            <person name="Kimata M."/>
            <person name="Watanabe M."/>
            <person name="Hiraoka S."/>
            <person name="Chiba Y."/>
            <person name="Ishida S."/>
            <person name="Ono Y."/>
            <person name="Takiguchi S."/>
            <person name="Watanabe S."/>
            <person name="Yosida M."/>
            <person name="Hotuta T."/>
            <person name="Kusano J."/>
            <person name="Kanehori K."/>
            <person name="Takahashi-Fujii A."/>
            <person name="Hara H."/>
            <person name="Tanase T.-O."/>
            <person name="Nomura Y."/>
            <person name="Togiya S."/>
            <person name="Komai F."/>
            <person name="Hara R."/>
            <person name="Takeuchi K."/>
            <person name="Arita M."/>
            <person name="Imose N."/>
            <person name="Musashino K."/>
            <person name="Yuuki H."/>
            <person name="Oshima A."/>
            <person name="Sasaki N."/>
            <person name="Aotsuka S."/>
            <person name="Yoshikawa Y."/>
            <person name="Matsunawa H."/>
            <person name="Ichihara T."/>
            <person name="Shiohata N."/>
            <person name="Sano S."/>
            <person name="Moriya S."/>
            <person name="Momiyama H."/>
            <person name="Satoh N."/>
            <person name="Takami S."/>
            <person name="Terashima Y."/>
            <person name="Suzuki O."/>
            <person name="Nakagawa S."/>
            <person name="Senoh A."/>
            <person name="Mizoguchi H."/>
            <person name="Goto Y."/>
            <person name="Shimizu F."/>
            <person name="Wakebe H."/>
            <person name="Hishigaki H."/>
            <person name="Watanabe T."/>
            <person name="Sugiyama A."/>
            <person name="Takemoto M."/>
            <person name="Kawakami B."/>
            <person name="Yamazaki M."/>
            <person name="Watanabe K."/>
            <person name="Kumagai A."/>
            <person name="Itakura S."/>
            <person name="Fukuzumi Y."/>
            <person name="Fujimori Y."/>
            <person name="Komiyama M."/>
            <person name="Tashiro H."/>
            <person name="Tanigami A."/>
            <person name="Fujiwara T."/>
            <person name="Ono T."/>
            <person name="Yamada K."/>
            <person name="Fujii Y."/>
            <person name="Ozaki K."/>
            <person name="Hirao M."/>
            <person name="Ohmori Y."/>
            <person name="Kawabata A."/>
            <person name="Hikiji T."/>
            <person name="Kobatake N."/>
            <person name="Inagaki H."/>
            <person name="Ikema Y."/>
            <person name="Okamoto S."/>
            <person name="Okitani R."/>
            <person name="Kawakami T."/>
            <person name="Noguchi S."/>
            <person name="Itoh T."/>
            <person name="Shigeta K."/>
            <person name="Senba T."/>
            <person name="Matsumura K."/>
            <person name="Nakajima Y."/>
            <person name="Mizuno T."/>
            <person name="Morinaga M."/>
            <person name="Sasaki M."/>
            <person name="Togashi T."/>
            <person name="Oyama M."/>
            <person name="Hata H."/>
            <person name="Watanabe M."/>
            <person name="Komatsu T."/>
            <person name="Mizushima-Sugano J."/>
            <person name="Satoh T."/>
            <person name="Shirai Y."/>
            <person name="Takahashi Y."/>
            <person name="Nakagawa K."/>
            <person name="Okumura K."/>
            <person name="Nagase T."/>
            <person name="Nomura N."/>
            <person name="Kikuchi H."/>
            <person name="Masuho Y."/>
            <person name="Yamashita R."/>
            <person name="Nakai K."/>
            <person name="Yada T."/>
            <person name="Nakamura Y."/>
            <person name="Ohara O."/>
            <person name="Isogai T."/>
            <person name="Sugano S."/>
        </authorList>
    </citation>
    <scope>NUCLEOTIDE SEQUENCE [LARGE SCALE MRNA]</scope>
    <source>
        <tissue>Colon</tissue>
        <tissue>Trachea</tissue>
    </source>
</reference>
<reference key="2">
    <citation type="journal article" date="2004" name="Genome Res.">
        <title>The status, quality, and expansion of the NIH full-length cDNA project: the Mammalian Gene Collection (MGC).</title>
        <authorList>
            <consortium name="The MGC Project Team"/>
        </authorList>
    </citation>
    <scope>NUCLEOTIDE SEQUENCE [LARGE SCALE MRNA]</scope>
    <source>
        <tissue>Placenta</tissue>
    </source>
</reference>
<reference key="3">
    <citation type="journal article" date="2008" name="Mol. Cell">
        <title>Kinase-selective enrichment enables quantitative phosphoproteomics of the kinome across the cell cycle.</title>
        <authorList>
            <person name="Daub H."/>
            <person name="Olsen J.V."/>
            <person name="Bairlein M."/>
            <person name="Gnad F."/>
            <person name="Oppermann F.S."/>
            <person name="Korner R."/>
            <person name="Greff Z."/>
            <person name="Keri G."/>
            <person name="Stemmann O."/>
            <person name="Mann M."/>
        </authorList>
    </citation>
    <scope>IDENTIFICATION BY MASS SPECTROMETRY [LARGE SCALE ANALYSIS]</scope>
    <source>
        <tissue>Cervix carcinoma</tissue>
    </source>
</reference>
<reference key="4">
    <citation type="journal article" date="2022" name="J. Virol.">
        <title>TMEMu45B Interacts with Sindbis Virus Nsp1 and Nsp4 and Inhibits Viral Replication.</title>
        <authorList>
            <person name="Yan F."/>
            <person name="Yang W."/>
            <person name="Wang X."/>
            <person name="Gao G."/>
        </authorList>
    </citation>
    <scope>FUNCTION</scope>
    <scope>INTERACTION WITH SINDBIS VIRUS PROTEINS NSP1 AND NSP4 (MICROBIAL INFECTION)</scope>
    <scope>INTERACTION WITH CHIKUNGUNYA VIRUS PROTEINS NSP1 AND NSP4 (MICROBIAL INFECTION)</scope>
    <scope>SUBCELLULAR LOCATION</scope>
    <scope>INDUCTION BY TYPE I INTERFERON</scope>
</reference>
<proteinExistence type="evidence at protein level"/>
<gene>
    <name type="primary">TMEM45B</name>
</gene>
<dbReference type="EMBL" id="AK098106">
    <property type="protein sequence ID" value="BAC05235.1"/>
    <property type="molecule type" value="mRNA"/>
</dbReference>
<dbReference type="EMBL" id="AK290283">
    <property type="protein sequence ID" value="BAF82972.1"/>
    <property type="molecule type" value="mRNA"/>
</dbReference>
<dbReference type="EMBL" id="AK292058">
    <property type="protein sequence ID" value="BAF84747.1"/>
    <property type="molecule type" value="mRNA"/>
</dbReference>
<dbReference type="EMBL" id="BC016153">
    <property type="protein sequence ID" value="AAH16153.1"/>
    <property type="molecule type" value="mRNA"/>
</dbReference>
<dbReference type="CCDS" id="CCDS8482.1"/>
<dbReference type="RefSeq" id="NP_001318139.1">
    <property type="nucleotide sequence ID" value="NM_001331210.2"/>
</dbReference>
<dbReference type="RefSeq" id="NP_001318140.1">
    <property type="nucleotide sequence ID" value="NM_001331211.2"/>
</dbReference>
<dbReference type="RefSeq" id="NP_001318141.1">
    <property type="nucleotide sequence ID" value="NM_001331212.2"/>
</dbReference>
<dbReference type="RefSeq" id="NP_620143.1">
    <property type="nucleotide sequence ID" value="NM_138788.5"/>
</dbReference>
<dbReference type="RefSeq" id="XP_016872677.1">
    <property type="nucleotide sequence ID" value="XM_017017188.2"/>
</dbReference>
<dbReference type="RefSeq" id="XP_016872678.1">
    <property type="nucleotide sequence ID" value="XM_017017189.1"/>
</dbReference>
<dbReference type="RefSeq" id="XP_047282310.1">
    <property type="nucleotide sequence ID" value="XM_047426354.1"/>
</dbReference>
<dbReference type="RefSeq" id="XP_047282311.1">
    <property type="nucleotide sequence ID" value="XM_047426355.1"/>
</dbReference>
<dbReference type="RefSeq" id="XP_047282312.1">
    <property type="nucleotide sequence ID" value="XM_047426356.1"/>
</dbReference>
<dbReference type="RefSeq" id="XP_047282313.1">
    <property type="nucleotide sequence ID" value="XM_047426357.1"/>
</dbReference>
<dbReference type="RefSeq" id="XP_047282314.1">
    <property type="nucleotide sequence ID" value="XM_047426358.1"/>
</dbReference>
<dbReference type="RefSeq" id="XP_054223621.1">
    <property type="nucleotide sequence ID" value="XM_054367646.1"/>
</dbReference>
<dbReference type="RefSeq" id="XP_054223622.1">
    <property type="nucleotide sequence ID" value="XM_054367647.1"/>
</dbReference>
<dbReference type="RefSeq" id="XP_054223623.1">
    <property type="nucleotide sequence ID" value="XM_054367648.1"/>
</dbReference>
<dbReference type="RefSeq" id="XP_054223624.1">
    <property type="nucleotide sequence ID" value="XM_054367649.1"/>
</dbReference>
<dbReference type="RefSeq" id="XP_054223625.1">
    <property type="nucleotide sequence ID" value="XM_054367650.1"/>
</dbReference>
<dbReference type="RefSeq" id="XP_054223626.1">
    <property type="nucleotide sequence ID" value="XM_054367651.1"/>
</dbReference>
<dbReference type="SMR" id="Q96B21"/>
<dbReference type="BioGRID" id="125675">
    <property type="interactions" value="47"/>
</dbReference>
<dbReference type="FunCoup" id="Q96B21">
    <property type="interactions" value="36"/>
</dbReference>
<dbReference type="IntAct" id="Q96B21">
    <property type="interactions" value="44"/>
</dbReference>
<dbReference type="STRING" id="9606.ENSP00000281441"/>
<dbReference type="iPTMnet" id="Q96B21"/>
<dbReference type="PhosphoSitePlus" id="Q96B21"/>
<dbReference type="SwissPalm" id="Q96B21"/>
<dbReference type="BioMuta" id="TMEM45B"/>
<dbReference type="DMDM" id="74731190"/>
<dbReference type="jPOST" id="Q96B21"/>
<dbReference type="MassIVE" id="Q96B21"/>
<dbReference type="PaxDb" id="9606-ENSP00000281441"/>
<dbReference type="PeptideAtlas" id="Q96B21"/>
<dbReference type="ProteomicsDB" id="76035"/>
<dbReference type="Antibodypedia" id="19209">
    <property type="antibodies" value="9 antibodies from 7 providers"/>
</dbReference>
<dbReference type="DNASU" id="120224"/>
<dbReference type="Ensembl" id="ENST00000281441.8">
    <property type="protein sequence ID" value="ENSP00000281441.3"/>
    <property type="gene ID" value="ENSG00000151715.8"/>
</dbReference>
<dbReference type="Ensembl" id="ENST00000524567.1">
    <property type="protein sequence ID" value="ENSP00000436293.1"/>
    <property type="gene ID" value="ENSG00000151715.8"/>
</dbReference>
<dbReference type="GeneID" id="120224"/>
<dbReference type="KEGG" id="hsa:120224"/>
<dbReference type="MANE-Select" id="ENST00000281441.8">
    <property type="protein sequence ID" value="ENSP00000281441.3"/>
    <property type="RefSeq nucleotide sequence ID" value="NM_138788.5"/>
    <property type="RefSeq protein sequence ID" value="NP_620143.1"/>
</dbReference>
<dbReference type="UCSC" id="uc001qfe.2">
    <property type="organism name" value="human"/>
</dbReference>
<dbReference type="AGR" id="HGNC:25194"/>
<dbReference type="CTD" id="120224"/>
<dbReference type="DisGeNET" id="120224"/>
<dbReference type="GeneCards" id="TMEM45B"/>
<dbReference type="HGNC" id="HGNC:25194">
    <property type="gene designation" value="TMEM45B"/>
</dbReference>
<dbReference type="HPA" id="ENSG00000151715">
    <property type="expression patterns" value="Tissue enhanced (esophagus, intestine)"/>
</dbReference>
<dbReference type="MIM" id="621075">
    <property type="type" value="gene"/>
</dbReference>
<dbReference type="neXtProt" id="NX_Q96B21"/>
<dbReference type="OpenTargets" id="ENSG00000151715"/>
<dbReference type="PharmGKB" id="PA134909603"/>
<dbReference type="VEuPathDB" id="HostDB:ENSG00000151715"/>
<dbReference type="eggNOG" id="ENOG502QU0J">
    <property type="taxonomic scope" value="Eukaryota"/>
</dbReference>
<dbReference type="GeneTree" id="ENSGT00940000157181"/>
<dbReference type="HOGENOM" id="CLU_059568_0_0_1"/>
<dbReference type="InParanoid" id="Q96B21"/>
<dbReference type="OMA" id="APEWDQK"/>
<dbReference type="OrthoDB" id="551896at2759"/>
<dbReference type="PAN-GO" id="Q96B21">
    <property type="GO annotations" value="0 GO annotations based on evolutionary models"/>
</dbReference>
<dbReference type="PhylomeDB" id="Q96B21"/>
<dbReference type="TreeFam" id="TF328673"/>
<dbReference type="PathwayCommons" id="Q96B21"/>
<dbReference type="SignaLink" id="Q96B21"/>
<dbReference type="BioGRID-ORCS" id="120224">
    <property type="hits" value="16 hits in 1145 CRISPR screens"/>
</dbReference>
<dbReference type="ChiTaRS" id="TMEM45B">
    <property type="organism name" value="human"/>
</dbReference>
<dbReference type="GenomeRNAi" id="120224"/>
<dbReference type="Pharos" id="Q96B21">
    <property type="development level" value="Tbio"/>
</dbReference>
<dbReference type="PRO" id="PR:Q96B21"/>
<dbReference type="Proteomes" id="UP000005640">
    <property type="component" value="Chromosome 11"/>
</dbReference>
<dbReference type="RNAct" id="Q96B21">
    <property type="molecule type" value="protein"/>
</dbReference>
<dbReference type="Bgee" id="ENSG00000151715">
    <property type="expression patterns" value="Expressed in ileal mucosa and 146 other cell types or tissues"/>
</dbReference>
<dbReference type="GO" id="GO:0010008">
    <property type="term" value="C:endosome membrane"/>
    <property type="evidence" value="ECO:0007669"/>
    <property type="project" value="UniProtKB-SubCell"/>
</dbReference>
<dbReference type="GO" id="GO:0005794">
    <property type="term" value="C:Golgi apparatus"/>
    <property type="evidence" value="ECO:0007669"/>
    <property type="project" value="UniProtKB-SubCell"/>
</dbReference>
<dbReference type="GO" id="GO:0005765">
    <property type="term" value="C:lysosomal membrane"/>
    <property type="evidence" value="ECO:0007669"/>
    <property type="project" value="UniProtKB-SubCell"/>
</dbReference>
<dbReference type="GO" id="GO:0045087">
    <property type="term" value="P:innate immune response"/>
    <property type="evidence" value="ECO:0007669"/>
    <property type="project" value="UniProtKB-KW"/>
</dbReference>
<dbReference type="InterPro" id="IPR006904">
    <property type="entry name" value="DUF716"/>
</dbReference>
<dbReference type="InterPro" id="IPR042127">
    <property type="entry name" value="TMEM45"/>
</dbReference>
<dbReference type="PANTHER" id="PTHR16007">
    <property type="entry name" value="EPIDIDYMAL MEMBRANE PROTEIN E9-RELATED"/>
    <property type="match status" value="1"/>
</dbReference>
<dbReference type="PANTHER" id="PTHR16007:SF59">
    <property type="entry name" value="TRANSMEMBRANE PROTEIN 45B"/>
    <property type="match status" value="1"/>
</dbReference>
<dbReference type="Pfam" id="PF04819">
    <property type="entry name" value="DUF716"/>
    <property type="match status" value="1"/>
</dbReference>
<comment type="function">
    <text evidence="4">Plays a role in innate immunity (PubMed:35938871). Mechanistically, promotes alphaviruses RNA degradation by interacting with the viral polymerase nsP4 and the mRNA-capping enzyme nsP1 and thereby interfering with the interaction between viral RNA and nsP1 (PubMed:35938871).</text>
</comment>
<comment type="subunit">
    <text evidence="4">(Microbial infection) Interacts with sindbis virus nsP1 and nsP4; these interactions lead to viral RNA replication inhibition.</text>
</comment>
<comment type="subunit">
    <text evidence="4">(Microbial infection) Interacts with chikungunya virus nsP1 and nsP4; these interactions lead to viral RNA replication inhibition.</text>
</comment>
<comment type="interaction">
    <interactant intactId="EBI-3923061">
        <id>Q96B21</id>
    </interactant>
    <interactant intactId="EBI-12109402">
        <id>Q86W74-2</id>
        <label>ANKRD46</label>
    </interactant>
    <organismsDiffer>false</organismsDiffer>
    <experiments>3</experiments>
</comment>
<comment type="interaction">
    <interactant intactId="EBI-3923061">
        <id>Q96B21</id>
    </interactant>
    <interactant intactId="EBI-715495">
        <id>P05090</id>
        <label>APOD</label>
    </interactant>
    <organismsDiffer>false</organismsDiffer>
    <experiments>3</experiments>
</comment>
<comment type="interaction">
    <interactant intactId="EBI-3923061">
        <id>Q96B21</id>
    </interactant>
    <interactant intactId="EBI-4290634">
        <id>Q9BQE5</id>
        <label>APOL2</label>
    </interactant>
    <organismsDiffer>false</organismsDiffer>
    <experiments>3</experiments>
</comment>
<comment type="interaction">
    <interactant intactId="EBI-3923061">
        <id>Q96B21</id>
    </interactant>
    <interactant intactId="EBI-745213">
        <id>P29972</id>
        <label>AQP1</label>
    </interactant>
    <organismsDiffer>false</organismsDiffer>
    <experiments>3</experiments>
</comment>
<comment type="interaction">
    <interactant intactId="EBI-3923061">
        <id>Q96B21</id>
    </interactant>
    <interactant intactId="EBI-3922513">
        <id>O95393</id>
        <label>BMP10</label>
    </interactant>
    <organismsDiffer>false</organismsDiffer>
    <experiments>3</experiments>
</comment>
<comment type="interaction">
    <interactant intactId="EBI-3923061">
        <id>Q96B21</id>
    </interactant>
    <interactant intactId="EBI-12003442">
        <id>Q8WVX3-2</id>
        <label>C4orf3</label>
    </interactant>
    <organismsDiffer>false</organismsDiffer>
    <experiments>3</experiments>
</comment>
<comment type="interaction">
    <interactant intactId="EBI-3923061">
        <id>Q96B21</id>
    </interactant>
    <interactant intactId="EBI-9686780">
        <id>Q06432</id>
        <label>CACNG1</label>
    </interactant>
    <organismsDiffer>false</organismsDiffer>
    <experiments>3</experiments>
</comment>
<comment type="interaction">
    <interactant intactId="EBI-3923061">
        <id>Q96B21</id>
    </interactant>
    <interactant intactId="EBI-3913685">
        <id>O95674</id>
        <label>CDS2</label>
    </interactant>
    <organismsDiffer>false</organismsDiffer>
    <experiments>3</experiments>
</comment>
<comment type="interaction">
    <interactant intactId="EBI-3923061">
        <id>Q96B21</id>
    </interactant>
    <interactant intactId="EBI-717654">
        <id>O14569</id>
        <label>CYB561D2</label>
    </interactant>
    <organismsDiffer>false</organismsDiffer>
    <experiments>3</experiments>
</comment>
<comment type="interaction">
    <interactant intactId="EBI-3923061">
        <id>Q96B21</id>
    </interactant>
    <interactant intactId="EBI-8645574">
        <id>Q9UPQ8</id>
        <label>DOLK</label>
    </interactant>
    <organismsDiffer>false</organismsDiffer>
    <experiments>3</experiments>
</comment>
<comment type="interaction">
    <interactant intactId="EBI-3923061">
        <id>Q96B21</id>
    </interactant>
    <interactant intactId="EBI-2876774">
        <id>Q92520</id>
        <label>FAM3C</label>
    </interactant>
    <organismsDiffer>false</organismsDiffer>
    <experiments>3</experiments>
</comment>
<comment type="interaction">
    <interactant intactId="EBI-3923061">
        <id>Q96B21</id>
    </interactant>
    <interactant intactId="EBI-724839">
        <id>Q14318</id>
        <label>FKBP8</label>
    </interactant>
    <organismsDiffer>false</organismsDiffer>
    <experiments>3</experiments>
</comment>
<comment type="interaction">
    <interactant intactId="EBI-3923061">
        <id>Q96B21</id>
    </interactant>
    <interactant intactId="EBI-11991950">
        <id>Q8WWP7</id>
        <label>GIMAP1</label>
    </interactant>
    <organismsDiffer>false</organismsDiffer>
    <experiments>3</experiments>
</comment>
<comment type="interaction">
    <interactant intactId="EBI-3923061">
        <id>Q96B21</id>
    </interactant>
    <interactant intactId="EBI-8503746">
        <id>Q9Y5U4</id>
        <label>INSIG2</label>
    </interactant>
    <organismsDiffer>false</organismsDiffer>
    <experiments>3</experiments>
</comment>
<comment type="interaction">
    <interactant intactId="EBI-3923061">
        <id>Q96B21</id>
    </interactant>
    <interactant intactId="EBI-8070286">
        <id>O43561-2</id>
        <label>LAT</label>
    </interactant>
    <organismsDiffer>false</organismsDiffer>
    <experiments>3</experiments>
</comment>
<comment type="interaction">
    <interactant intactId="EBI-3923061">
        <id>Q96B21</id>
    </interactant>
    <interactant intactId="EBI-6380741">
        <id>P42857</id>
        <label>NSG1</label>
    </interactant>
    <organismsDiffer>false</organismsDiffer>
    <experiments>3</experiments>
</comment>
<comment type="interaction">
    <interactant intactId="EBI-3923061">
        <id>Q96B21</id>
    </interactant>
    <interactant intactId="EBI-692836">
        <id>P26678</id>
        <label>PLN</label>
    </interactant>
    <organismsDiffer>false</organismsDiffer>
    <experiments>3</experiments>
</comment>
<comment type="interaction">
    <interactant intactId="EBI-3923061">
        <id>Q96B21</id>
    </interactant>
    <interactant intactId="EBI-12188331">
        <id>P60201-2</id>
        <label>PLP1</label>
    </interactant>
    <organismsDiffer>false</organismsDiffer>
    <experiments>3</experiments>
</comment>
<comment type="interaction">
    <interactant intactId="EBI-3923061">
        <id>Q96B21</id>
    </interactant>
    <interactant intactId="EBI-10485931">
        <id>Q5VZY2</id>
        <label>PLPP4</label>
    </interactant>
    <organismsDiffer>false</organismsDiffer>
    <experiments>3</experiments>
</comment>
<comment type="interaction">
    <interactant intactId="EBI-3923061">
        <id>Q96B21</id>
    </interactant>
    <interactant intactId="EBI-8652744">
        <id>Q96IW7</id>
        <label>SEC22A</label>
    </interactant>
    <organismsDiffer>false</organismsDiffer>
    <experiments>3</experiments>
</comment>
<comment type="interaction">
    <interactant intactId="EBI-3923061">
        <id>Q96B21</id>
    </interactant>
    <interactant intactId="EBI-81088">
        <id>Q15436</id>
        <label>SEC23A</label>
    </interactant>
    <organismsDiffer>false</organismsDiffer>
    <experiments>3</experiments>
</comment>
<comment type="interaction">
    <interactant intactId="EBI-3923061">
        <id>Q96B21</id>
    </interactant>
    <interactant intactId="EBI-10226799">
        <id>Q0VAQ4</id>
        <label>SMAGP</label>
    </interactant>
    <organismsDiffer>false</organismsDiffer>
    <experiments>3</experiments>
</comment>
<comment type="interaction">
    <interactant intactId="EBI-3923061">
        <id>Q96B21</id>
    </interactant>
    <interactant intactId="EBI-12188413">
        <id>B2RUZ4</id>
        <label>SMIM1</label>
    </interactant>
    <organismsDiffer>false</organismsDiffer>
    <experiments>3</experiments>
</comment>
<comment type="interaction">
    <interactant intactId="EBI-3923061">
        <id>Q96B21</id>
    </interactant>
    <interactant intactId="EBI-11957067">
        <id>Q6UX34</id>
        <label>SNORC</label>
    </interactant>
    <organismsDiffer>false</organismsDiffer>
    <experiments>3</experiments>
</comment>
<comment type="interaction">
    <interactant intactId="EBI-3923061">
        <id>Q96B21</id>
    </interactant>
    <interactant intactId="EBI-12187159">
        <id>O43759-2</id>
        <label>SYNGR1</label>
    </interactant>
    <organismsDiffer>false</organismsDiffer>
    <experiments>3</experiments>
</comment>
<comment type="interaction">
    <interactant intactId="EBI-3923061">
        <id>Q96B21</id>
    </interactant>
    <interactant intactId="EBI-10694905">
        <id>Q5BJH2-2</id>
        <label>TMEM128</label>
    </interactant>
    <organismsDiffer>false</organismsDiffer>
    <experiments>3</experiments>
</comment>
<comment type="interaction">
    <interactant intactId="EBI-3923061">
        <id>Q96B21</id>
    </interactant>
    <interactant intactId="EBI-10173151">
        <id>A2RU14</id>
        <label>TMEM218</label>
    </interactant>
    <organismsDiffer>false</organismsDiffer>
    <experiments>3</experiments>
</comment>
<comment type="interaction">
    <interactant intactId="EBI-3923061">
        <id>Q96B21</id>
    </interactant>
    <interactant intactId="EBI-12195227">
        <id>Q8NBD8</id>
        <label>TMEM229B</label>
    </interactant>
    <organismsDiffer>false</organismsDiffer>
    <experiments>3</experiments>
</comment>
<comment type="interaction">
    <interactant intactId="EBI-3923061">
        <id>Q96B21</id>
    </interactant>
    <interactant intactId="EBI-12887458">
        <id>Q9BU79</id>
        <label>TMEM243</label>
    </interactant>
    <organismsDiffer>false</organismsDiffer>
    <experiments>3</experiments>
</comment>
<comment type="interaction">
    <interactant intactId="EBI-3923061">
        <id>Q96B21</id>
    </interactant>
    <interactant intactId="EBI-11956809">
        <id>Q8TBM7</id>
        <label>TMEM254</label>
    </interactant>
    <organismsDiffer>false</organismsDiffer>
    <experiments>3</experiments>
</comment>
<comment type="interaction">
    <interactant intactId="EBI-3923061">
        <id>Q96B21</id>
    </interactant>
    <interactant intactId="EBI-2852148">
        <id>Q9H2L4</id>
        <label>TMEM60</label>
    </interactant>
    <organismsDiffer>false</organismsDiffer>
    <experiments>3</experiments>
</comment>
<comment type="interaction">
    <interactant intactId="EBI-3923061">
        <id>Q96B21</id>
    </interactant>
    <interactant intactId="EBI-12111910">
        <id>Q5BJF2</id>
        <label>TMEM97</label>
    </interactant>
    <organismsDiffer>false</organismsDiffer>
    <experiments>3</experiments>
</comment>
<comment type="interaction">
    <interactant intactId="EBI-3923061">
        <id>Q96B21</id>
    </interactant>
    <interactant intactId="EBI-717441">
        <id>O14798</id>
        <label>TNFRSF10C</label>
    </interactant>
    <organismsDiffer>false</organismsDiffer>
    <experiments>3</experiments>
</comment>
<comment type="interaction">
    <interactant intactId="EBI-3923061">
        <id>Q96B21</id>
    </interactant>
    <interactant intactId="EBI-16746122">
        <id>Q9NSU2-1</id>
        <label>TREX1</label>
    </interactant>
    <organismsDiffer>false</organismsDiffer>
    <experiments>3</experiments>
</comment>
<comment type="interaction">
    <interactant intactId="EBI-3923061">
        <id>Q96B21</id>
    </interactant>
    <interactant intactId="EBI-12045841">
        <id>Q86UF1</id>
        <label>TSPAN33</label>
    </interactant>
    <organismsDiffer>false</organismsDiffer>
    <experiments>3</experiments>
</comment>
<comment type="interaction">
    <interactant intactId="EBI-3923061">
        <id>Q96B21</id>
    </interactant>
    <interactant intactId="EBI-10243654">
        <id>Q5BVD1</id>
        <label>TTMP</label>
    </interactant>
    <organismsDiffer>false</organismsDiffer>
    <experiments>3</experiments>
</comment>
<comment type="interaction">
    <interactant intactId="EBI-3923061">
        <id>Q96B21</id>
    </interactant>
    <interactant intactId="EBI-12237619">
        <id>O75841</id>
        <label>UPK1B</label>
    </interactant>
    <organismsDiffer>false</organismsDiffer>
    <experiments>3</experiments>
</comment>
<comment type="interaction">
    <interactant intactId="EBI-3923061">
        <id>Q96B21</id>
    </interactant>
    <interactant intactId="EBI-10191195">
        <id>O95183</id>
        <label>VAMP5</label>
    </interactant>
    <organismsDiffer>false</organismsDiffer>
    <experiments>3</experiments>
</comment>
<comment type="subcellular location">
    <subcellularLocation>
        <location evidence="4">Endosome membrane</location>
        <topology evidence="5">Multi-pass membrane protein</topology>
    </subcellularLocation>
    <subcellularLocation>
        <location evidence="4">Lysosome membrane</location>
        <topology evidence="5">Multi-pass membrane protein</topology>
    </subcellularLocation>
    <subcellularLocation>
        <location evidence="4">Golgi apparatus</location>
        <location evidence="4">trans-Golgi network membrane</location>
        <topology evidence="5">Multi-pass membrane protein</topology>
    </subcellularLocation>
</comment>
<comment type="induction">
    <text evidence="6">By type I interferons.</text>
</comment>
<comment type="similarity">
    <text evidence="5">Belongs to the TMEM45 family.</text>
</comment>
<name>TM45B_HUMAN</name>
<organism>
    <name type="scientific">Homo sapiens</name>
    <name type="common">Human</name>
    <dbReference type="NCBI Taxonomy" id="9606"/>
    <lineage>
        <taxon>Eukaryota</taxon>
        <taxon>Metazoa</taxon>
        <taxon>Chordata</taxon>
        <taxon>Craniata</taxon>
        <taxon>Vertebrata</taxon>
        <taxon>Euteleostomi</taxon>
        <taxon>Mammalia</taxon>
        <taxon>Eutheria</taxon>
        <taxon>Euarchontoglires</taxon>
        <taxon>Primates</taxon>
        <taxon>Haplorrhini</taxon>
        <taxon>Catarrhini</taxon>
        <taxon>Hominidae</taxon>
        <taxon>Homo</taxon>
    </lineage>
</organism>
<evidence type="ECO:0000250" key="1">
    <source>
        <dbReference type="UniProtKB" id="Q497B2"/>
    </source>
</evidence>
<evidence type="ECO:0000250" key="2">
    <source>
        <dbReference type="UniProtKB" id="Q8VCZ2"/>
    </source>
</evidence>
<evidence type="ECO:0000255" key="3"/>
<evidence type="ECO:0000269" key="4">
    <source>
    </source>
</evidence>
<evidence type="ECO:0000305" key="5"/>
<evidence type="ECO:0000305" key="6">
    <source>
    </source>
</evidence>
<accession>Q96B21</accession>
<accession>A8K2L8</accession>
<sequence>MANFKGHALPGSFFLIIGLCWSVKYPLKYFSHTRKNSPLHYYQRLEIVEAAIRTLFSVTGILAEQFVPDGPHLHLYHENHWIKLMNWQHSTMYLFFAVSGIVDMLTYLVSHVPLGVDRLVMAVAVFMEGFLFYYHVHNRPPLDQHIHSLLLYALFGGCVSISLEVIFRDHIVLELFRTSLIILQGTWFWQIGFVLFPPFGTPEWDQKDDANLMFITMCFCWHYLAALSIVAVNYSLVYCLLTRMKRHGRGEIIGIQKLNSDDTYQTALLSGSDEE</sequence>
<protein>
    <recommendedName>
        <fullName>Transmembrane protein 45B</fullName>
    </recommendedName>
</protein>